<comment type="function">
    <text evidence="1">Component of the acetyl coenzyme A carboxylase (ACC) complex. First, biotin carboxylase catalyzes the carboxylation of biotin on its carrier protein (BCCP) and then the CO(2) group is transferred by the carboxyltransferase to acetyl-CoA to form malonyl-CoA.</text>
</comment>
<comment type="catalytic activity">
    <reaction evidence="1">
        <text>N(6)-carboxybiotinyl-L-lysyl-[protein] + acetyl-CoA = N(6)-biotinyl-L-lysyl-[protein] + malonyl-CoA</text>
        <dbReference type="Rhea" id="RHEA:54728"/>
        <dbReference type="Rhea" id="RHEA-COMP:10505"/>
        <dbReference type="Rhea" id="RHEA-COMP:10506"/>
        <dbReference type="ChEBI" id="CHEBI:57288"/>
        <dbReference type="ChEBI" id="CHEBI:57384"/>
        <dbReference type="ChEBI" id="CHEBI:83144"/>
        <dbReference type="ChEBI" id="CHEBI:83145"/>
        <dbReference type="EC" id="2.1.3.15"/>
    </reaction>
</comment>
<comment type="pathway">
    <text evidence="1">Lipid metabolism; malonyl-CoA biosynthesis; malonyl-CoA from acetyl-CoA: step 1/1.</text>
</comment>
<comment type="subunit">
    <text evidence="1">Acetyl-CoA carboxylase is a heterohexamer composed of biotin carboxyl carrier protein (AccB), biotin carboxylase (AccC) and two subunits each of ACCase subunit alpha (AccA) and ACCase subunit beta (AccD).</text>
</comment>
<comment type="subcellular location">
    <subcellularLocation>
        <location evidence="1">Cytoplasm</location>
    </subcellularLocation>
</comment>
<comment type="similarity">
    <text evidence="1">Belongs to the AccA family.</text>
</comment>
<reference key="1">
    <citation type="journal article" date="2000" name="Nucleic Acids Res.">
        <title>Genome sequences of Chlamydia trachomatis MoPn and Chlamydia pneumoniae AR39.</title>
        <authorList>
            <person name="Read T.D."/>
            <person name="Brunham R.C."/>
            <person name="Shen C."/>
            <person name="Gill S.R."/>
            <person name="Heidelberg J.F."/>
            <person name="White O."/>
            <person name="Hickey E.K."/>
            <person name="Peterson J.D."/>
            <person name="Utterback T.R."/>
            <person name="Berry K.J."/>
            <person name="Bass S."/>
            <person name="Linher K.D."/>
            <person name="Weidman J.F."/>
            <person name="Khouri H.M."/>
            <person name="Craven B."/>
            <person name="Bowman C."/>
            <person name="Dodson R.J."/>
            <person name="Gwinn M.L."/>
            <person name="Nelson W.C."/>
            <person name="DeBoy R.T."/>
            <person name="Kolonay J.F."/>
            <person name="McClarty G."/>
            <person name="Salzberg S.L."/>
            <person name="Eisen J.A."/>
            <person name="Fraser C.M."/>
        </authorList>
    </citation>
    <scope>NUCLEOTIDE SEQUENCE [LARGE SCALE GENOMIC DNA]</scope>
    <source>
        <strain>MoPn / Nigg</strain>
    </source>
</reference>
<gene>
    <name evidence="1" type="primary">accA</name>
    <name type="ordered locus">TC_0536</name>
</gene>
<organism>
    <name type="scientific">Chlamydia muridarum (strain MoPn / Nigg)</name>
    <dbReference type="NCBI Taxonomy" id="243161"/>
    <lineage>
        <taxon>Bacteria</taxon>
        <taxon>Pseudomonadati</taxon>
        <taxon>Chlamydiota</taxon>
        <taxon>Chlamydiia</taxon>
        <taxon>Chlamydiales</taxon>
        <taxon>Chlamydiaceae</taxon>
        <taxon>Chlamydia/Chlamydophila group</taxon>
        <taxon>Chlamydia</taxon>
    </lineage>
</organism>
<accession>Q9PKC9</accession>
<dbReference type="EC" id="2.1.3.15" evidence="1"/>
<dbReference type="EMBL" id="AE002160">
    <property type="protein sequence ID" value="AAF39376.1"/>
    <property type="molecule type" value="Genomic_DNA"/>
</dbReference>
<dbReference type="PIR" id="D81691">
    <property type="entry name" value="D81691"/>
</dbReference>
<dbReference type="RefSeq" id="WP_010230698.1">
    <property type="nucleotide sequence ID" value="NZ_CP063055.1"/>
</dbReference>
<dbReference type="SMR" id="Q9PKC9"/>
<dbReference type="GeneID" id="1245896"/>
<dbReference type="KEGG" id="cmu:TC_0536"/>
<dbReference type="eggNOG" id="COG0825">
    <property type="taxonomic scope" value="Bacteria"/>
</dbReference>
<dbReference type="HOGENOM" id="CLU_015486_0_2_0"/>
<dbReference type="OrthoDB" id="9808023at2"/>
<dbReference type="UniPathway" id="UPA00655">
    <property type="reaction ID" value="UER00711"/>
</dbReference>
<dbReference type="Proteomes" id="UP000000800">
    <property type="component" value="Chromosome"/>
</dbReference>
<dbReference type="GO" id="GO:0009317">
    <property type="term" value="C:acetyl-CoA carboxylase complex"/>
    <property type="evidence" value="ECO:0007669"/>
    <property type="project" value="InterPro"/>
</dbReference>
<dbReference type="GO" id="GO:0003989">
    <property type="term" value="F:acetyl-CoA carboxylase activity"/>
    <property type="evidence" value="ECO:0007669"/>
    <property type="project" value="InterPro"/>
</dbReference>
<dbReference type="GO" id="GO:0005524">
    <property type="term" value="F:ATP binding"/>
    <property type="evidence" value="ECO:0007669"/>
    <property type="project" value="UniProtKB-KW"/>
</dbReference>
<dbReference type="GO" id="GO:0016743">
    <property type="term" value="F:carboxyl- or carbamoyltransferase activity"/>
    <property type="evidence" value="ECO:0007669"/>
    <property type="project" value="UniProtKB-UniRule"/>
</dbReference>
<dbReference type="GO" id="GO:0006633">
    <property type="term" value="P:fatty acid biosynthetic process"/>
    <property type="evidence" value="ECO:0007669"/>
    <property type="project" value="UniProtKB-KW"/>
</dbReference>
<dbReference type="GO" id="GO:2001295">
    <property type="term" value="P:malonyl-CoA biosynthetic process"/>
    <property type="evidence" value="ECO:0007669"/>
    <property type="project" value="UniProtKB-UniRule"/>
</dbReference>
<dbReference type="Gene3D" id="3.90.226.10">
    <property type="entry name" value="2-enoyl-CoA Hydratase, Chain A, domain 1"/>
    <property type="match status" value="1"/>
</dbReference>
<dbReference type="HAMAP" id="MF_00823">
    <property type="entry name" value="AcetylCoA_CT_alpha"/>
    <property type="match status" value="1"/>
</dbReference>
<dbReference type="InterPro" id="IPR001095">
    <property type="entry name" value="Acetyl_CoA_COase_a_su"/>
</dbReference>
<dbReference type="InterPro" id="IPR029045">
    <property type="entry name" value="ClpP/crotonase-like_dom_sf"/>
</dbReference>
<dbReference type="InterPro" id="IPR011763">
    <property type="entry name" value="COA_CT_C"/>
</dbReference>
<dbReference type="NCBIfam" id="TIGR00513">
    <property type="entry name" value="accA"/>
    <property type="match status" value="1"/>
</dbReference>
<dbReference type="NCBIfam" id="NF041504">
    <property type="entry name" value="AccA_sub"/>
    <property type="match status" value="1"/>
</dbReference>
<dbReference type="NCBIfam" id="NF004344">
    <property type="entry name" value="PRK05724.1"/>
    <property type="match status" value="1"/>
</dbReference>
<dbReference type="PANTHER" id="PTHR42853">
    <property type="entry name" value="ACETYL-COENZYME A CARBOXYLASE CARBOXYL TRANSFERASE SUBUNIT ALPHA"/>
    <property type="match status" value="1"/>
</dbReference>
<dbReference type="PANTHER" id="PTHR42853:SF3">
    <property type="entry name" value="ACETYL-COENZYME A CARBOXYLASE CARBOXYL TRANSFERASE SUBUNIT ALPHA, CHLOROPLASTIC"/>
    <property type="match status" value="1"/>
</dbReference>
<dbReference type="Pfam" id="PF03255">
    <property type="entry name" value="ACCA"/>
    <property type="match status" value="1"/>
</dbReference>
<dbReference type="PRINTS" id="PR01069">
    <property type="entry name" value="ACCCTRFRASEA"/>
</dbReference>
<dbReference type="SUPFAM" id="SSF52096">
    <property type="entry name" value="ClpP/crotonase"/>
    <property type="match status" value="1"/>
</dbReference>
<dbReference type="PROSITE" id="PS50989">
    <property type="entry name" value="COA_CT_CTER"/>
    <property type="match status" value="1"/>
</dbReference>
<keyword id="KW-0067">ATP-binding</keyword>
<keyword id="KW-0963">Cytoplasm</keyword>
<keyword id="KW-0275">Fatty acid biosynthesis</keyword>
<keyword id="KW-0276">Fatty acid metabolism</keyword>
<keyword id="KW-0444">Lipid biosynthesis</keyword>
<keyword id="KW-0443">Lipid metabolism</keyword>
<keyword id="KW-0547">Nucleotide-binding</keyword>
<keyword id="KW-0808">Transferase</keyword>
<sequence>MELLPHEKQVVEYEKTIADFKEKNKENSLLSSSEIQKLENRLDRLKEKIYSNLTPWERVQICRHPSRPRTINYIEGMCEEFVELCGDRTFRDDPAVVGGFAKIQGQRFMLIGQEKGCDTTSRMHRNFGMLCPEGFRKALRLAKMAEKFGLPIIFLVDTPGAFPGLTAEERGQGWAIATNLFELARLATPIIVVVIGEGCSGGALGMAIGDVVAMLEHSYYSVISPEGCASILWKDPKKNSDAAAMLKMHGEDLKGFAIVDAVIKEPIGGAHHNPVATYRSVQEYVLQEWLKLKDLPVEELLEKRYQKFRTIGLYETSSESSSEA</sequence>
<evidence type="ECO:0000255" key="1">
    <source>
        <dbReference type="HAMAP-Rule" id="MF_00823"/>
    </source>
</evidence>
<evidence type="ECO:0000255" key="2">
    <source>
        <dbReference type="PROSITE-ProRule" id="PRU01137"/>
    </source>
</evidence>
<name>ACCA_CHLMU</name>
<feature type="chain" id="PRO_0000223751" description="Acetyl-coenzyme A carboxylase carboxyl transferase subunit alpha">
    <location>
        <begin position="1"/>
        <end position="324"/>
    </location>
</feature>
<feature type="domain" description="CoA carboxyltransferase C-terminal" evidence="2">
    <location>
        <begin position="41"/>
        <end position="291"/>
    </location>
</feature>
<protein>
    <recommendedName>
        <fullName evidence="1">Acetyl-coenzyme A carboxylase carboxyl transferase subunit alpha</fullName>
        <shortName evidence="1">ACCase subunit alpha</shortName>
        <shortName evidence="1">Acetyl-CoA carboxylase carboxyltransferase subunit alpha</shortName>
        <ecNumber evidence="1">2.1.3.15</ecNumber>
    </recommendedName>
</protein>
<proteinExistence type="inferred from homology"/>